<dbReference type="EC" id="3.4.24.-" evidence="2"/>
<dbReference type="EMBL" id="CR318603">
    <property type="status" value="NOT_ANNOTATED_CDS"/>
    <property type="molecule type" value="Genomic_DNA"/>
</dbReference>
<dbReference type="SMR" id="A0A1D5NSK0"/>
<dbReference type="STRING" id="7955.ENSDARP00000142816"/>
<dbReference type="InParanoid" id="A0A1D5NSK0"/>
<dbReference type="OrthoDB" id="527990at2759"/>
<dbReference type="Proteomes" id="UP000000437">
    <property type="component" value="Unplaced"/>
</dbReference>
<dbReference type="Bgee" id="ENSDARG00000098915">
    <property type="expression patterns" value="Expressed in early embryo and 9 other cell types or tissues"/>
</dbReference>
<dbReference type="GO" id="GO:0016020">
    <property type="term" value="C:membrane"/>
    <property type="evidence" value="ECO:0007669"/>
    <property type="project" value="UniProtKB-SubCell"/>
</dbReference>
<dbReference type="GO" id="GO:0046872">
    <property type="term" value="F:metal ion binding"/>
    <property type="evidence" value="ECO:0007669"/>
    <property type="project" value="UniProtKB-KW"/>
</dbReference>
<dbReference type="GO" id="GO:0004222">
    <property type="term" value="F:metalloendopeptidase activity"/>
    <property type="evidence" value="ECO:0007669"/>
    <property type="project" value="InterPro"/>
</dbReference>
<dbReference type="GO" id="GO:0007155">
    <property type="term" value="P:cell adhesion"/>
    <property type="evidence" value="ECO:0007669"/>
    <property type="project" value="InterPro"/>
</dbReference>
<dbReference type="GO" id="GO:0061371">
    <property type="term" value="P:determination of heart left/right asymmetry"/>
    <property type="evidence" value="ECO:0000315"/>
    <property type="project" value="UniProtKB"/>
</dbReference>
<dbReference type="GO" id="GO:0061966">
    <property type="term" value="P:establishment of left/right asymmetry"/>
    <property type="evidence" value="ECO:0000315"/>
    <property type="project" value="UniProtKB"/>
</dbReference>
<dbReference type="GO" id="GO:0006508">
    <property type="term" value="P:proteolysis"/>
    <property type="evidence" value="ECO:0007669"/>
    <property type="project" value="UniProtKB-KW"/>
</dbReference>
<dbReference type="FunFam" id="3.90.132.10:FF:000002">
    <property type="entry name" value="Leishmanolysin like peptidase 2"/>
    <property type="match status" value="1"/>
</dbReference>
<dbReference type="FunFam" id="3.10.170.20:FF:000012">
    <property type="entry name" value="Leishmanolysin-like peptidase 2"/>
    <property type="match status" value="1"/>
</dbReference>
<dbReference type="Gene3D" id="3.10.170.20">
    <property type="match status" value="1"/>
</dbReference>
<dbReference type="Gene3D" id="3.90.132.10">
    <property type="entry name" value="Leishmanolysin , domain 2"/>
    <property type="match status" value="1"/>
</dbReference>
<dbReference type="Gene3D" id="2.30.34.10">
    <property type="entry name" value="Leishmanolysin domain 4"/>
    <property type="match status" value="1"/>
</dbReference>
<dbReference type="InterPro" id="IPR001577">
    <property type="entry name" value="Peptidase_M8"/>
</dbReference>
<dbReference type="PANTHER" id="PTHR10942:SF6">
    <property type="entry name" value="CILIATED LEFT-RIGHT ORGANIZER METALLOPEPTIDASE"/>
    <property type="match status" value="1"/>
</dbReference>
<dbReference type="PANTHER" id="PTHR10942">
    <property type="entry name" value="LEISHMANOLYSIN-LIKE PEPTIDASE"/>
    <property type="match status" value="1"/>
</dbReference>
<dbReference type="Pfam" id="PF01457">
    <property type="entry name" value="Peptidase_M8"/>
    <property type="match status" value="1"/>
</dbReference>
<dbReference type="SUPFAM" id="SSF55486">
    <property type="entry name" value="Metalloproteases ('zincins'), catalytic domain"/>
    <property type="match status" value="1"/>
</dbReference>
<dbReference type="PROSITE" id="PS00142">
    <property type="entry name" value="ZINC_PROTEASE"/>
    <property type="match status" value="1"/>
</dbReference>
<keyword id="KW-0217">Developmental protein</keyword>
<keyword id="KW-0378">Hydrolase</keyword>
<keyword id="KW-0472">Membrane</keyword>
<keyword id="KW-0479">Metal-binding</keyword>
<keyword id="KW-0482">Metalloprotease</keyword>
<keyword id="KW-0645">Protease</keyword>
<keyword id="KW-1185">Reference proteome</keyword>
<keyword id="KW-0732">Signal</keyword>
<keyword id="KW-0812">Transmembrane</keyword>
<keyword id="KW-1133">Transmembrane helix</keyword>
<keyword id="KW-0862">Zinc</keyword>
<sequence length="623" mass="69342">MSFLLCIGILLLPWFPCVCGKCIFDQIQRSVNVVSPPTAQYASAYRFKTQRSKRHIMPMDNLQPIRIKIWIPSESPALSDWEREKLMSAVGEAVSEVSSLLSVKRVKDRLLLNRDVNKYCKFIWRNSSTLNHMKCGRAHENYRFESCLGVIIPDEHLDGCSVYPNPEHPVPTVLRPRGPGVPDADFLLYVFTHNTEKCRAESSVLAYTAHCQTGSDGRPLAGTMVICRETLKKERYTYQHFVKVTTVIHELFHVLGFSKELLSNWKDFGVDCWSHGQVTSTDQTGQVRLYSPTVIRAMQKHFNSTHTDLGAPLENKDAALDGLSSHWEARVLQGSIMAASLVEASLVRIDAITLAALQDTGWYSVNHSRAQSLVWGEGEGSDFGSVSACHNSSAFFCTGSGLGCHFLHLNKGECVTDQYLDGCHIFKPLANASECWIEDNARSGMNEGGGEIFGSDSRCFISNITRLNNVTAYTPVSGHCYRHRCTGINKYHIQVKDSDWMDCPAGTSIEVSGYQGFIFCPENRLCKYSDLAPPTSTQRTESLFSDTTAQSDLGMMEKDAAVQPSFTSLFLVSEAKISLAAVLSLMAVFALLSAAVLLYRKNLSVRVHAASYRTPLPHILYRN</sequence>
<proteinExistence type="evidence at protein level"/>
<gene>
    <name type="primary">cirop</name>
    <name type="ORF">si:ch211-216p19.5</name>
</gene>
<reference key="1">
    <citation type="journal article" date="2013" name="Nature">
        <title>The zebrafish reference genome sequence and its relationship to the human genome.</title>
        <authorList>
            <person name="Howe K."/>
            <person name="Clark M.D."/>
            <person name="Torroja C.F."/>
            <person name="Torrance J."/>
            <person name="Berthelot C."/>
            <person name="Muffato M."/>
            <person name="Collins J.E."/>
            <person name="Humphray S."/>
            <person name="McLaren K."/>
            <person name="Matthews L."/>
            <person name="McLaren S."/>
            <person name="Sealy I."/>
            <person name="Caccamo M."/>
            <person name="Churcher C."/>
            <person name="Scott C."/>
            <person name="Barrett J.C."/>
            <person name="Koch R."/>
            <person name="Rauch G.J."/>
            <person name="White S."/>
            <person name="Chow W."/>
            <person name="Kilian B."/>
            <person name="Quintais L.T."/>
            <person name="Guerra-Assuncao J.A."/>
            <person name="Zhou Y."/>
            <person name="Gu Y."/>
            <person name="Yen J."/>
            <person name="Vogel J.H."/>
            <person name="Eyre T."/>
            <person name="Redmond S."/>
            <person name="Banerjee R."/>
            <person name="Chi J."/>
            <person name="Fu B."/>
            <person name="Langley E."/>
            <person name="Maguire S.F."/>
            <person name="Laird G.K."/>
            <person name="Lloyd D."/>
            <person name="Kenyon E."/>
            <person name="Donaldson S."/>
            <person name="Sehra H."/>
            <person name="Almeida-King J."/>
            <person name="Loveland J."/>
            <person name="Trevanion S."/>
            <person name="Jones M."/>
            <person name="Quail M."/>
            <person name="Willey D."/>
            <person name="Hunt A."/>
            <person name="Burton J."/>
            <person name="Sims S."/>
            <person name="McLay K."/>
            <person name="Plumb B."/>
            <person name="Davis J."/>
            <person name="Clee C."/>
            <person name="Oliver K."/>
            <person name="Clark R."/>
            <person name="Riddle C."/>
            <person name="Elliot D."/>
            <person name="Threadgold G."/>
            <person name="Harden G."/>
            <person name="Ware D."/>
            <person name="Begum S."/>
            <person name="Mortimore B."/>
            <person name="Kerry G."/>
            <person name="Heath P."/>
            <person name="Phillimore B."/>
            <person name="Tracey A."/>
            <person name="Corby N."/>
            <person name="Dunn M."/>
            <person name="Johnson C."/>
            <person name="Wood J."/>
            <person name="Clark S."/>
            <person name="Pelan S."/>
            <person name="Griffiths G."/>
            <person name="Smith M."/>
            <person name="Glithero R."/>
            <person name="Howden P."/>
            <person name="Barker N."/>
            <person name="Lloyd C."/>
            <person name="Stevens C."/>
            <person name="Harley J."/>
            <person name="Holt K."/>
            <person name="Panagiotidis G."/>
            <person name="Lovell J."/>
            <person name="Beasley H."/>
            <person name="Henderson C."/>
            <person name="Gordon D."/>
            <person name="Auger K."/>
            <person name="Wright D."/>
            <person name="Collins J."/>
            <person name="Raisen C."/>
            <person name="Dyer L."/>
            <person name="Leung K."/>
            <person name="Robertson L."/>
            <person name="Ambridge K."/>
            <person name="Leongamornlert D."/>
            <person name="McGuire S."/>
            <person name="Gilderthorp R."/>
            <person name="Griffiths C."/>
            <person name="Manthravadi D."/>
            <person name="Nichol S."/>
            <person name="Barker G."/>
            <person name="Whitehead S."/>
            <person name="Kay M."/>
            <person name="Brown J."/>
            <person name="Murnane C."/>
            <person name="Gray E."/>
            <person name="Humphries M."/>
            <person name="Sycamore N."/>
            <person name="Barker D."/>
            <person name="Saunders D."/>
            <person name="Wallis J."/>
            <person name="Babbage A."/>
            <person name="Hammond S."/>
            <person name="Mashreghi-Mohammadi M."/>
            <person name="Barr L."/>
            <person name="Martin S."/>
            <person name="Wray P."/>
            <person name="Ellington A."/>
            <person name="Matthews N."/>
            <person name="Ellwood M."/>
            <person name="Woodmansey R."/>
            <person name="Clark G."/>
            <person name="Cooper J."/>
            <person name="Tromans A."/>
            <person name="Grafham D."/>
            <person name="Skuce C."/>
            <person name="Pandian R."/>
            <person name="Andrews R."/>
            <person name="Harrison E."/>
            <person name="Kimberley A."/>
            <person name="Garnett J."/>
            <person name="Fosker N."/>
            <person name="Hall R."/>
            <person name="Garner P."/>
            <person name="Kelly D."/>
            <person name="Bird C."/>
            <person name="Palmer S."/>
            <person name="Gehring I."/>
            <person name="Berger A."/>
            <person name="Dooley C.M."/>
            <person name="Ersan-Urun Z."/>
            <person name="Eser C."/>
            <person name="Geiger H."/>
            <person name="Geisler M."/>
            <person name="Karotki L."/>
            <person name="Kirn A."/>
            <person name="Konantz J."/>
            <person name="Konantz M."/>
            <person name="Oberlander M."/>
            <person name="Rudolph-Geiger S."/>
            <person name="Teucke M."/>
            <person name="Lanz C."/>
            <person name="Raddatz G."/>
            <person name="Osoegawa K."/>
            <person name="Zhu B."/>
            <person name="Rapp A."/>
            <person name="Widaa S."/>
            <person name="Langford C."/>
            <person name="Yang F."/>
            <person name="Schuster S.C."/>
            <person name="Carter N.P."/>
            <person name="Harrow J."/>
            <person name="Ning Z."/>
            <person name="Herrero J."/>
            <person name="Searle S.M."/>
            <person name="Enright A."/>
            <person name="Geisler R."/>
            <person name="Plasterk R.H."/>
            <person name="Lee C."/>
            <person name="Westerfield M."/>
            <person name="de Jong P.J."/>
            <person name="Zon L.I."/>
            <person name="Postlethwait J.H."/>
            <person name="Nusslein-Volhard C."/>
            <person name="Hubbard T.J."/>
            <person name="Roest Crollius H."/>
            <person name="Rogers J."/>
            <person name="Stemple D.L."/>
        </authorList>
    </citation>
    <scope>NUCLEOTIDE SEQUENCE [LARGE SCALE GENOMIC DNA]</scope>
    <source>
        <strain>Tuebingen</strain>
    </source>
</reference>
<reference key="2">
    <citation type="journal article" date="2022" name="Nat. Genet.">
        <title>Discovery of a genetic module essential for assigning left-right asymmetry in humans and ancestral vertebrates.</title>
        <authorList>
            <person name="Szenker-Ravi E."/>
            <person name="Ott T."/>
            <person name="Khatoo M."/>
            <person name="de Bellaing A.M."/>
            <person name="Goh W.X."/>
            <person name="Chong Y.L."/>
            <person name="Beckers A."/>
            <person name="Kannesan D."/>
            <person name="Louvel G."/>
            <person name="Anujan P."/>
            <person name="Ravi V."/>
            <person name="Bonnard C."/>
            <person name="Moutton S."/>
            <person name="Schoen P."/>
            <person name="Fradin M."/>
            <person name="Colin E."/>
            <person name="Megarbane A."/>
            <person name="Daou L."/>
            <person name="Chehab G."/>
            <person name="Di Filippo S."/>
            <person name="Rooryck C."/>
            <person name="Deleuze J.F."/>
            <person name="Boland A."/>
            <person name="Arribard N."/>
            <person name="Eker R."/>
            <person name="Tohari S."/>
            <person name="Ng A.Y."/>
            <person name="Rio M."/>
            <person name="Lim C.T."/>
            <person name="Eisenhaber B."/>
            <person name="Eisenhaber F."/>
            <person name="Venkatesh B."/>
            <person name="Amiel J."/>
            <person name="Crollius H.R."/>
            <person name="Gordon C.T."/>
            <person name="Gossler A."/>
            <person name="Roy S."/>
            <person name="Attie-Bitach T."/>
            <person name="Blum M."/>
            <person name="Bouvagnet P."/>
            <person name="Reversade B."/>
        </authorList>
    </citation>
    <scope>DISRUPTION PHENOTYPE</scope>
    <scope>FUNCTION</scope>
    <scope>TISSUE SPECIFICITY</scope>
    <scope>MUTAGENESIS OF 249-HIS--HIS-253</scope>
</reference>
<evidence type="ECO:0000250" key="1">
    <source>
        <dbReference type="UniProtKB" id="P08148"/>
    </source>
</evidence>
<evidence type="ECO:0000250" key="2">
    <source>
        <dbReference type="UniProtKB" id="Q9VH19"/>
    </source>
</evidence>
<evidence type="ECO:0000255" key="3"/>
<evidence type="ECO:0000255" key="4">
    <source>
        <dbReference type="PROSITE-ProRule" id="PRU10095"/>
    </source>
</evidence>
<evidence type="ECO:0000269" key="5">
    <source>
    </source>
</evidence>
<evidence type="ECO:0000305" key="6"/>
<protein>
    <recommendedName>
        <fullName>Ciliated left-right organizer metallopeptidase</fullName>
        <ecNumber evidence="2">3.4.24.-</ecNumber>
    </recommendedName>
    <alternativeName>
        <fullName>Leishmanolysin-like peptidase 2</fullName>
    </alternativeName>
</protein>
<name>CIROP_DANRE</name>
<comment type="function">
    <text evidence="5">Plays an essential role for patterning the left-right axis. Requires solely on the left side, downstream of the leftward flow, but upstream of dand5, a nodal inhibitor involved in left-right patterning.</text>
</comment>
<comment type="cofactor">
    <cofactor evidence="1">
        <name>Zn(2+)</name>
        <dbReference type="ChEBI" id="CHEBI:29105"/>
    </cofactor>
    <text evidence="1">Binds 1 zinc ion per subunit.</text>
</comment>
<comment type="subcellular location">
    <subcellularLocation>
        <location evidence="3">Membrane</location>
        <topology evidence="3">Single-pass type I membrane protein</topology>
    </subcellularLocation>
</comment>
<comment type="tissue specificity">
    <text evidence="5">Expressed specifically in dorsal forerunner cells (DFCs) that form a ciliated Kupffer's vesicle later.</text>
</comment>
<comment type="disruption phenotype">
    <text evidence="5">Embryos with CRISPR-induced cirop null are fertile but the developing heart at 48 hours post-fertilization (hpf) show cardiac looping randomization. Only 25% of cirop deficient embryos show a normal positioning of brain, heart and pancreas at 72 hpf. No other ciliopathy-related phenotypes such as body curvature, kidney cysts or hydrocephalus are observed in cirop mutant embryos at 72 hpf. When dand5 is depleted on the left side of cirop null zebrafish embryos, the phenotype is rescued.</text>
</comment>
<comment type="similarity">
    <text evidence="6">Belongs to the peptidase M8 family.</text>
</comment>
<feature type="signal peptide" evidence="3">
    <location>
        <begin position="1"/>
        <end position="20"/>
    </location>
</feature>
<feature type="chain" id="PRO_0000455737" description="Ciliated left-right organizer metallopeptidase">
    <location>
        <begin position="21"/>
        <end position="623"/>
    </location>
</feature>
<feature type="topological domain" description="Extracellular" evidence="6">
    <location>
        <begin position="21"/>
        <end position="578"/>
    </location>
</feature>
<feature type="transmembrane region" description="Helical" evidence="3">
    <location>
        <begin position="579"/>
        <end position="599"/>
    </location>
</feature>
<feature type="topological domain" description="Cytoplasmic" evidence="6">
    <location>
        <begin position="600"/>
        <end position="623"/>
    </location>
</feature>
<feature type="active site" evidence="4">
    <location>
        <position position="250"/>
    </location>
</feature>
<feature type="binding site" evidence="4">
    <location>
        <position position="249"/>
    </location>
    <ligand>
        <name>Zn(2+)</name>
        <dbReference type="ChEBI" id="CHEBI:29105"/>
        <note>catalytic</note>
    </ligand>
</feature>
<feature type="binding site" evidence="4">
    <location>
        <position position="253"/>
    </location>
    <ligand>
        <name>Zn(2+)</name>
        <dbReference type="ChEBI" id="CHEBI:29105"/>
        <note>catalytic</note>
    </ligand>
</feature>
<feature type="binding site" evidence="4">
    <location>
        <position position="326"/>
    </location>
    <ligand>
        <name>Zn(2+)</name>
        <dbReference type="ChEBI" id="CHEBI:29105"/>
        <note>catalytic</note>
    </ligand>
</feature>
<feature type="mutagenesis site" description="Unable to rescue the heart looping defects in cirop deficient larvae." evidence="5">
    <original>HELFH</original>
    <variation>AALFA</variation>
    <location>
        <begin position="249"/>
        <end position="253"/>
    </location>
</feature>
<organism>
    <name type="scientific">Danio rerio</name>
    <name type="common">Zebrafish</name>
    <name type="synonym">Brachydanio rerio</name>
    <dbReference type="NCBI Taxonomy" id="7955"/>
    <lineage>
        <taxon>Eukaryota</taxon>
        <taxon>Metazoa</taxon>
        <taxon>Chordata</taxon>
        <taxon>Craniata</taxon>
        <taxon>Vertebrata</taxon>
        <taxon>Euteleostomi</taxon>
        <taxon>Actinopterygii</taxon>
        <taxon>Neopterygii</taxon>
        <taxon>Teleostei</taxon>
        <taxon>Ostariophysi</taxon>
        <taxon>Cypriniformes</taxon>
        <taxon>Danionidae</taxon>
        <taxon>Danioninae</taxon>
        <taxon>Danio</taxon>
    </lineage>
</organism>
<accession>A0A1D5NSK0</accession>